<proteinExistence type="inferred from homology"/>
<gene>
    <name evidence="1" type="primary">proB</name>
    <name type="ordered locus">SPN23F08540</name>
</gene>
<keyword id="KW-0028">Amino-acid biosynthesis</keyword>
<keyword id="KW-0067">ATP-binding</keyword>
<keyword id="KW-0963">Cytoplasm</keyword>
<keyword id="KW-0418">Kinase</keyword>
<keyword id="KW-0547">Nucleotide-binding</keyword>
<keyword id="KW-0641">Proline biosynthesis</keyword>
<keyword id="KW-0808">Transferase</keyword>
<dbReference type="EC" id="2.7.2.11" evidence="1"/>
<dbReference type="EMBL" id="FM211187">
    <property type="protein sequence ID" value="CAR68685.1"/>
    <property type="molecule type" value="Genomic_DNA"/>
</dbReference>
<dbReference type="RefSeq" id="WP_000875739.1">
    <property type="nucleotide sequence ID" value="NC_011900.1"/>
</dbReference>
<dbReference type="SMR" id="B8ZP34"/>
<dbReference type="KEGG" id="sne:SPN23F08540"/>
<dbReference type="HOGENOM" id="CLU_025400_2_0_9"/>
<dbReference type="UniPathway" id="UPA00098">
    <property type="reaction ID" value="UER00359"/>
</dbReference>
<dbReference type="GO" id="GO:0005829">
    <property type="term" value="C:cytosol"/>
    <property type="evidence" value="ECO:0007669"/>
    <property type="project" value="TreeGrafter"/>
</dbReference>
<dbReference type="GO" id="GO:0005524">
    <property type="term" value="F:ATP binding"/>
    <property type="evidence" value="ECO:0007669"/>
    <property type="project" value="UniProtKB-KW"/>
</dbReference>
<dbReference type="GO" id="GO:0004349">
    <property type="term" value="F:glutamate 5-kinase activity"/>
    <property type="evidence" value="ECO:0007669"/>
    <property type="project" value="UniProtKB-UniRule"/>
</dbReference>
<dbReference type="GO" id="GO:0003723">
    <property type="term" value="F:RNA binding"/>
    <property type="evidence" value="ECO:0007669"/>
    <property type="project" value="InterPro"/>
</dbReference>
<dbReference type="GO" id="GO:0055129">
    <property type="term" value="P:L-proline biosynthetic process"/>
    <property type="evidence" value="ECO:0007669"/>
    <property type="project" value="UniProtKB-UniRule"/>
</dbReference>
<dbReference type="CDD" id="cd04242">
    <property type="entry name" value="AAK_G5K_ProB"/>
    <property type="match status" value="1"/>
</dbReference>
<dbReference type="CDD" id="cd21157">
    <property type="entry name" value="PUA_G5K"/>
    <property type="match status" value="1"/>
</dbReference>
<dbReference type="FunFam" id="2.30.130.10:FF:000011">
    <property type="entry name" value="Glutamate 5-kinase"/>
    <property type="match status" value="1"/>
</dbReference>
<dbReference type="FunFam" id="3.40.1160.10:FF:000018">
    <property type="entry name" value="Glutamate 5-kinase"/>
    <property type="match status" value="1"/>
</dbReference>
<dbReference type="Gene3D" id="3.40.1160.10">
    <property type="entry name" value="Acetylglutamate kinase-like"/>
    <property type="match status" value="1"/>
</dbReference>
<dbReference type="Gene3D" id="2.30.130.10">
    <property type="entry name" value="PUA domain"/>
    <property type="match status" value="1"/>
</dbReference>
<dbReference type="HAMAP" id="MF_00456">
    <property type="entry name" value="ProB"/>
    <property type="match status" value="1"/>
</dbReference>
<dbReference type="InterPro" id="IPR036393">
    <property type="entry name" value="AceGlu_kinase-like_sf"/>
</dbReference>
<dbReference type="InterPro" id="IPR001048">
    <property type="entry name" value="Asp/Glu/Uridylate_kinase"/>
</dbReference>
<dbReference type="InterPro" id="IPR041739">
    <property type="entry name" value="G5K_ProB"/>
</dbReference>
<dbReference type="InterPro" id="IPR001057">
    <property type="entry name" value="Glu/AcGlu_kinase"/>
</dbReference>
<dbReference type="InterPro" id="IPR011529">
    <property type="entry name" value="Glu_5kinase"/>
</dbReference>
<dbReference type="InterPro" id="IPR005715">
    <property type="entry name" value="Glu_5kinase/COase_Synthase"/>
</dbReference>
<dbReference type="InterPro" id="IPR019797">
    <property type="entry name" value="Glutamate_5-kinase_CS"/>
</dbReference>
<dbReference type="InterPro" id="IPR002478">
    <property type="entry name" value="PUA"/>
</dbReference>
<dbReference type="InterPro" id="IPR015947">
    <property type="entry name" value="PUA-like_sf"/>
</dbReference>
<dbReference type="InterPro" id="IPR036974">
    <property type="entry name" value="PUA_sf"/>
</dbReference>
<dbReference type="NCBIfam" id="TIGR01027">
    <property type="entry name" value="proB"/>
    <property type="match status" value="1"/>
</dbReference>
<dbReference type="PANTHER" id="PTHR43654">
    <property type="entry name" value="GLUTAMATE 5-KINASE"/>
    <property type="match status" value="1"/>
</dbReference>
<dbReference type="PANTHER" id="PTHR43654:SF1">
    <property type="entry name" value="ISOPENTENYL PHOSPHATE KINASE"/>
    <property type="match status" value="1"/>
</dbReference>
<dbReference type="Pfam" id="PF00696">
    <property type="entry name" value="AA_kinase"/>
    <property type="match status" value="1"/>
</dbReference>
<dbReference type="Pfam" id="PF01472">
    <property type="entry name" value="PUA"/>
    <property type="match status" value="1"/>
</dbReference>
<dbReference type="PIRSF" id="PIRSF000729">
    <property type="entry name" value="GK"/>
    <property type="match status" value="1"/>
</dbReference>
<dbReference type="PRINTS" id="PR00474">
    <property type="entry name" value="GLU5KINASE"/>
</dbReference>
<dbReference type="SMART" id="SM00359">
    <property type="entry name" value="PUA"/>
    <property type="match status" value="1"/>
</dbReference>
<dbReference type="SUPFAM" id="SSF53633">
    <property type="entry name" value="Carbamate kinase-like"/>
    <property type="match status" value="1"/>
</dbReference>
<dbReference type="SUPFAM" id="SSF88697">
    <property type="entry name" value="PUA domain-like"/>
    <property type="match status" value="1"/>
</dbReference>
<dbReference type="PROSITE" id="PS00902">
    <property type="entry name" value="GLUTAMATE_5_KINASE"/>
    <property type="match status" value="1"/>
</dbReference>
<dbReference type="PROSITE" id="PS50890">
    <property type="entry name" value="PUA"/>
    <property type="match status" value="1"/>
</dbReference>
<protein>
    <recommendedName>
        <fullName evidence="1">Glutamate 5-kinase</fullName>
        <ecNumber evidence="1">2.7.2.11</ecNumber>
    </recommendedName>
    <alternativeName>
        <fullName evidence="1">Gamma-glutamyl kinase</fullName>
        <shortName evidence="1">GK</shortName>
    </alternativeName>
</protein>
<name>PROB_STRPJ</name>
<feature type="chain" id="PRO_1000193705" description="Glutamate 5-kinase">
    <location>
        <begin position="1"/>
        <end position="369"/>
    </location>
</feature>
<feature type="domain" description="PUA" evidence="1">
    <location>
        <begin position="275"/>
        <end position="355"/>
    </location>
</feature>
<feature type="binding site" evidence="1">
    <location>
        <position position="9"/>
    </location>
    <ligand>
        <name>ATP</name>
        <dbReference type="ChEBI" id="CHEBI:30616"/>
    </ligand>
</feature>
<feature type="binding site" evidence="1">
    <location>
        <position position="49"/>
    </location>
    <ligand>
        <name>substrate</name>
    </ligand>
</feature>
<feature type="binding site" evidence="1">
    <location>
        <position position="136"/>
    </location>
    <ligand>
        <name>substrate</name>
    </ligand>
</feature>
<feature type="binding site" evidence="1">
    <location>
        <position position="148"/>
    </location>
    <ligand>
        <name>substrate</name>
    </ligand>
</feature>
<feature type="binding site" evidence="1">
    <location>
        <begin position="168"/>
        <end position="169"/>
    </location>
    <ligand>
        <name>ATP</name>
        <dbReference type="ChEBI" id="CHEBI:30616"/>
    </ligand>
</feature>
<feature type="binding site" evidence="1">
    <location>
        <begin position="210"/>
        <end position="216"/>
    </location>
    <ligand>
        <name>ATP</name>
        <dbReference type="ChEBI" id="CHEBI:30616"/>
    </ligand>
</feature>
<accession>B8ZP34</accession>
<sequence>MKYKRIVFKVGTSSLTNEDGSLSRSKVKDITQQLAMLHEAGHELILVSSGAIAAGFGALGFKKRPTKIADKQASAAVGQGLLLEEYTTNLLLRQIVSAQILLTQDDFVDKRRYKNAHQALSVLLNRGAIPIINENDSVVIDELKVGDNDTLSAQVAAMVQADLLVFLTDVDGLYTGNPNSDPRAKRLERIETINCEIIDMAGGAGSSNGTGGMLTKIKAATIATESGVPVYICSSLKSDSMIEAAEETEDGSYFVAQEKGLRTQKQWLAFYAQSQGSIWVDKGAAEALSQHGKSLLLSGIVEAEGVFSYGDIVTVFDKESGKSLGKGRVQFGASALEDMLRSQKAKGVLIYRDDWISITPEIQLLFTEF</sequence>
<evidence type="ECO:0000255" key="1">
    <source>
        <dbReference type="HAMAP-Rule" id="MF_00456"/>
    </source>
</evidence>
<reference key="1">
    <citation type="journal article" date="2009" name="J. Bacteriol.">
        <title>Role of conjugative elements in the evolution of the multidrug-resistant pandemic clone Streptococcus pneumoniae Spain23F ST81.</title>
        <authorList>
            <person name="Croucher N.J."/>
            <person name="Walker D."/>
            <person name="Romero P."/>
            <person name="Lennard N."/>
            <person name="Paterson G.K."/>
            <person name="Bason N.C."/>
            <person name="Mitchell A.M."/>
            <person name="Quail M.A."/>
            <person name="Andrew P.W."/>
            <person name="Parkhill J."/>
            <person name="Bentley S.D."/>
            <person name="Mitchell T.J."/>
        </authorList>
    </citation>
    <scope>NUCLEOTIDE SEQUENCE [LARGE SCALE GENOMIC DNA]</scope>
    <source>
        <strain>ATCC 700669 / Spain 23F-1</strain>
    </source>
</reference>
<comment type="function">
    <text evidence="1">Catalyzes the transfer of a phosphate group to glutamate to form L-glutamate 5-phosphate.</text>
</comment>
<comment type="catalytic activity">
    <reaction evidence="1">
        <text>L-glutamate + ATP = L-glutamyl 5-phosphate + ADP</text>
        <dbReference type="Rhea" id="RHEA:14877"/>
        <dbReference type="ChEBI" id="CHEBI:29985"/>
        <dbReference type="ChEBI" id="CHEBI:30616"/>
        <dbReference type="ChEBI" id="CHEBI:58274"/>
        <dbReference type="ChEBI" id="CHEBI:456216"/>
        <dbReference type="EC" id="2.7.2.11"/>
    </reaction>
</comment>
<comment type="pathway">
    <text evidence="1">Amino-acid biosynthesis; L-proline biosynthesis; L-glutamate 5-semialdehyde from L-glutamate: step 1/2.</text>
</comment>
<comment type="subcellular location">
    <subcellularLocation>
        <location evidence="1">Cytoplasm</location>
    </subcellularLocation>
</comment>
<comment type="similarity">
    <text evidence="1">Belongs to the glutamate 5-kinase family.</text>
</comment>
<organism>
    <name type="scientific">Streptococcus pneumoniae (strain ATCC 700669 / Spain 23F-1)</name>
    <dbReference type="NCBI Taxonomy" id="561276"/>
    <lineage>
        <taxon>Bacteria</taxon>
        <taxon>Bacillati</taxon>
        <taxon>Bacillota</taxon>
        <taxon>Bacilli</taxon>
        <taxon>Lactobacillales</taxon>
        <taxon>Streptococcaceae</taxon>
        <taxon>Streptococcus</taxon>
    </lineage>
</organism>